<accession>B4T0T8</accession>
<organism>
    <name type="scientific">Salmonella newport (strain SL254)</name>
    <dbReference type="NCBI Taxonomy" id="423368"/>
    <lineage>
        <taxon>Bacteria</taxon>
        <taxon>Pseudomonadati</taxon>
        <taxon>Pseudomonadota</taxon>
        <taxon>Gammaproteobacteria</taxon>
        <taxon>Enterobacterales</taxon>
        <taxon>Enterobacteriaceae</taxon>
        <taxon>Salmonella</taxon>
    </lineage>
</organism>
<feature type="chain" id="PRO_1000100973" description="ATP-dependent protease ATPase subunit HslU">
    <location>
        <begin position="1"/>
        <end position="443"/>
    </location>
</feature>
<feature type="binding site" evidence="1">
    <location>
        <position position="18"/>
    </location>
    <ligand>
        <name>ATP</name>
        <dbReference type="ChEBI" id="CHEBI:30616"/>
    </ligand>
</feature>
<feature type="binding site" evidence="1">
    <location>
        <begin position="60"/>
        <end position="65"/>
    </location>
    <ligand>
        <name>ATP</name>
        <dbReference type="ChEBI" id="CHEBI:30616"/>
    </ligand>
</feature>
<feature type="binding site" evidence="1">
    <location>
        <position position="256"/>
    </location>
    <ligand>
        <name>ATP</name>
        <dbReference type="ChEBI" id="CHEBI:30616"/>
    </ligand>
</feature>
<feature type="binding site" evidence="1">
    <location>
        <position position="321"/>
    </location>
    <ligand>
        <name>ATP</name>
        <dbReference type="ChEBI" id="CHEBI:30616"/>
    </ligand>
</feature>
<feature type="binding site" evidence="1">
    <location>
        <position position="393"/>
    </location>
    <ligand>
        <name>ATP</name>
        <dbReference type="ChEBI" id="CHEBI:30616"/>
    </ligand>
</feature>
<evidence type="ECO:0000255" key="1">
    <source>
        <dbReference type="HAMAP-Rule" id="MF_00249"/>
    </source>
</evidence>
<comment type="function">
    <text evidence="1">ATPase subunit of a proteasome-like degradation complex; this subunit has chaperone activity. The binding of ATP and its subsequent hydrolysis by HslU are essential for unfolding of protein substrates subsequently hydrolyzed by HslV. HslU recognizes the N-terminal part of its protein substrates and unfolds these before they are guided to HslV for hydrolysis.</text>
</comment>
<comment type="subunit">
    <text evidence="1">A double ring-shaped homohexamer of HslV is capped on each side by a ring-shaped HslU homohexamer. The assembly of the HslU/HslV complex is dependent on binding of ATP.</text>
</comment>
<comment type="subcellular location">
    <subcellularLocation>
        <location evidence="1">Cytoplasm</location>
    </subcellularLocation>
</comment>
<comment type="induction">
    <text evidence="1">By heat shock.</text>
</comment>
<comment type="similarity">
    <text evidence="1">Belongs to the ClpX chaperone family. HslU subfamily.</text>
</comment>
<keyword id="KW-0067">ATP-binding</keyword>
<keyword id="KW-0143">Chaperone</keyword>
<keyword id="KW-0963">Cytoplasm</keyword>
<keyword id="KW-0547">Nucleotide-binding</keyword>
<keyword id="KW-0346">Stress response</keyword>
<name>HSLU_SALNS</name>
<dbReference type="EMBL" id="CP001113">
    <property type="protein sequence ID" value="ACF62992.1"/>
    <property type="molecule type" value="Genomic_DNA"/>
</dbReference>
<dbReference type="RefSeq" id="WP_001293360.1">
    <property type="nucleotide sequence ID" value="NZ_CCMR01000001.1"/>
</dbReference>
<dbReference type="SMR" id="B4T0T8"/>
<dbReference type="KEGG" id="see:SNSL254_A4421"/>
<dbReference type="HOGENOM" id="CLU_033123_0_0_6"/>
<dbReference type="Proteomes" id="UP000008824">
    <property type="component" value="Chromosome"/>
</dbReference>
<dbReference type="GO" id="GO:0009376">
    <property type="term" value="C:HslUV protease complex"/>
    <property type="evidence" value="ECO:0007669"/>
    <property type="project" value="UniProtKB-UniRule"/>
</dbReference>
<dbReference type="GO" id="GO:0005524">
    <property type="term" value="F:ATP binding"/>
    <property type="evidence" value="ECO:0007669"/>
    <property type="project" value="UniProtKB-UniRule"/>
</dbReference>
<dbReference type="GO" id="GO:0016887">
    <property type="term" value="F:ATP hydrolysis activity"/>
    <property type="evidence" value="ECO:0007669"/>
    <property type="project" value="InterPro"/>
</dbReference>
<dbReference type="GO" id="GO:0008233">
    <property type="term" value="F:peptidase activity"/>
    <property type="evidence" value="ECO:0007669"/>
    <property type="project" value="InterPro"/>
</dbReference>
<dbReference type="GO" id="GO:0036402">
    <property type="term" value="F:proteasome-activating activity"/>
    <property type="evidence" value="ECO:0007669"/>
    <property type="project" value="UniProtKB-UniRule"/>
</dbReference>
<dbReference type="GO" id="GO:0043335">
    <property type="term" value="P:protein unfolding"/>
    <property type="evidence" value="ECO:0007669"/>
    <property type="project" value="UniProtKB-UniRule"/>
</dbReference>
<dbReference type="GO" id="GO:0051603">
    <property type="term" value="P:proteolysis involved in protein catabolic process"/>
    <property type="evidence" value="ECO:0007669"/>
    <property type="project" value="TreeGrafter"/>
</dbReference>
<dbReference type="CDD" id="cd19498">
    <property type="entry name" value="RecA-like_HslU"/>
    <property type="match status" value="1"/>
</dbReference>
<dbReference type="FunFam" id="1.10.8.10:FF:000012">
    <property type="entry name" value="ATP-dependent protease ATPase subunit HslU"/>
    <property type="match status" value="1"/>
</dbReference>
<dbReference type="FunFam" id="1.10.8.10:FF:000028">
    <property type="entry name" value="ATP-dependent protease ATPase subunit HslU"/>
    <property type="match status" value="1"/>
</dbReference>
<dbReference type="FunFam" id="1.10.8.60:FF:000027">
    <property type="entry name" value="ATP-dependent protease ATPase subunit HslU"/>
    <property type="match status" value="1"/>
</dbReference>
<dbReference type="FunFam" id="3.40.50.300:FF:000213">
    <property type="entry name" value="ATP-dependent protease ATPase subunit HslU"/>
    <property type="match status" value="1"/>
</dbReference>
<dbReference type="FunFam" id="3.40.50.300:FF:000220">
    <property type="entry name" value="ATP-dependent protease ATPase subunit HslU"/>
    <property type="match status" value="1"/>
</dbReference>
<dbReference type="Gene3D" id="1.10.8.60">
    <property type="match status" value="1"/>
</dbReference>
<dbReference type="Gene3D" id="1.10.8.10">
    <property type="entry name" value="DNA helicase RuvA subunit, C-terminal domain"/>
    <property type="match status" value="2"/>
</dbReference>
<dbReference type="Gene3D" id="3.40.50.300">
    <property type="entry name" value="P-loop containing nucleotide triphosphate hydrolases"/>
    <property type="match status" value="1"/>
</dbReference>
<dbReference type="HAMAP" id="MF_00249">
    <property type="entry name" value="HslU"/>
    <property type="match status" value="1"/>
</dbReference>
<dbReference type="InterPro" id="IPR003593">
    <property type="entry name" value="AAA+_ATPase"/>
</dbReference>
<dbReference type="InterPro" id="IPR050052">
    <property type="entry name" value="ATP-dep_Clp_protease_ClpX"/>
</dbReference>
<dbReference type="InterPro" id="IPR003959">
    <property type="entry name" value="ATPase_AAA_core"/>
</dbReference>
<dbReference type="InterPro" id="IPR019489">
    <property type="entry name" value="Clp_ATPase_C"/>
</dbReference>
<dbReference type="InterPro" id="IPR004491">
    <property type="entry name" value="HslU"/>
</dbReference>
<dbReference type="InterPro" id="IPR027417">
    <property type="entry name" value="P-loop_NTPase"/>
</dbReference>
<dbReference type="NCBIfam" id="TIGR00390">
    <property type="entry name" value="hslU"/>
    <property type="match status" value="1"/>
</dbReference>
<dbReference type="NCBIfam" id="NF003544">
    <property type="entry name" value="PRK05201.1"/>
    <property type="match status" value="1"/>
</dbReference>
<dbReference type="PANTHER" id="PTHR48102">
    <property type="entry name" value="ATP-DEPENDENT CLP PROTEASE ATP-BINDING SUBUNIT CLPX-LIKE, MITOCHONDRIAL-RELATED"/>
    <property type="match status" value="1"/>
</dbReference>
<dbReference type="PANTHER" id="PTHR48102:SF3">
    <property type="entry name" value="ATP-DEPENDENT PROTEASE ATPASE SUBUNIT HSLU"/>
    <property type="match status" value="1"/>
</dbReference>
<dbReference type="Pfam" id="PF00004">
    <property type="entry name" value="AAA"/>
    <property type="match status" value="1"/>
</dbReference>
<dbReference type="Pfam" id="PF07724">
    <property type="entry name" value="AAA_2"/>
    <property type="match status" value="1"/>
</dbReference>
<dbReference type="SMART" id="SM00382">
    <property type="entry name" value="AAA"/>
    <property type="match status" value="1"/>
</dbReference>
<dbReference type="SMART" id="SM01086">
    <property type="entry name" value="ClpB_D2-small"/>
    <property type="match status" value="1"/>
</dbReference>
<dbReference type="SUPFAM" id="SSF52540">
    <property type="entry name" value="P-loop containing nucleoside triphosphate hydrolases"/>
    <property type="match status" value="1"/>
</dbReference>
<sequence length="443" mass="49668">MSEMTPREIVSELNKHIIGQDNAKRSVAIALRNRWRRMQLDEELRHEVTPKNILMIGPTGVGKTEIARRLAKLANAPFIKVEATKFTEVGYVGKEVDSIIRDLTDAAVKMVRVQAIEKNRYRAEELAEERILDVLIPPAKNNWGQAEQQQEPSAARQTFRKKLREGQLDDKEIEINLAAAPMGVEIMAPPGMEEMTSQLQSMFQNLGGQKQKPRKLKIKDAMKLLVEEEAAKLVNPEELKQDAIDAVEQHGIVFIDEIDKICKRGETSGPDVSREGVQRDLLPLVEGCTVSTKHGMVKTDHILFIASGAFQVAKPSDLIPELQGRLPIRVELQALTTSDFERILTEPNASVTVQYKALMATEGVNIEFTDSGIKRIAEAAWQVNETTENIGARRLHTVLERLMEEISYNASDLHGQNITIDAEYVSKHLDALVADEDLSRFIL</sequence>
<proteinExistence type="inferred from homology"/>
<reference key="1">
    <citation type="journal article" date="2011" name="J. Bacteriol.">
        <title>Comparative genomics of 28 Salmonella enterica isolates: evidence for CRISPR-mediated adaptive sublineage evolution.</title>
        <authorList>
            <person name="Fricke W.F."/>
            <person name="Mammel M.K."/>
            <person name="McDermott P.F."/>
            <person name="Tartera C."/>
            <person name="White D.G."/>
            <person name="Leclerc J.E."/>
            <person name="Ravel J."/>
            <person name="Cebula T.A."/>
        </authorList>
    </citation>
    <scope>NUCLEOTIDE SEQUENCE [LARGE SCALE GENOMIC DNA]</scope>
    <source>
        <strain>SL254</strain>
    </source>
</reference>
<protein>
    <recommendedName>
        <fullName evidence="1">ATP-dependent protease ATPase subunit HslU</fullName>
    </recommendedName>
    <alternativeName>
        <fullName evidence="1">Heat shock protein HslU</fullName>
    </alternativeName>
    <alternativeName>
        <fullName evidence="1">Unfoldase HslU</fullName>
    </alternativeName>
</protein>
<gene>
    <name evidence="1" type="primary">hslU</name>
    <name type="ordered locus">SNSL254_A4421</name>
</gene>